<accession>Q9PIW6</accession>
<accession>Q0PBX6</accession>
<evidence type="ECO:0000255" key="1">
    <source>
        <dbReference type="HAMAP-Rule" id="MF_01225"/>
    </source>
</evidence>
<evidence type="ECO:0000255" key="2">
    <source>
        <dbReference type="PROSITE-ProRule" id="PRU01266"/>
    </source>
</evidence>
<name>MOAA_CAMJE</name>
<sequence>MLIDQFGRKINYLRISVTQRCNFRCLYCMPKIPFDYQPKENLLSFEELFLFVKAAIDEGIEKIRITGGEPLLRKDLSIFIKMISDYKSDIDLAITTNGFLLKDFAKDLKNAGLKRLNISLDTLDHKKAKTLAQKDVLDSVLSGIDEALNLDLKVKLNTVALKNLNDDELISLLEFAKSKKAQIRFIEFMENTHAYGKLQGLKRDEIIQILSQKYQIQLIKKDEKAPVSIYKADDYEFGIIDPHSHEFCDSCNRIRLSAEGLLIPCLYFDEALSIKEAVRKGDIKAAVEILQEVLRNKPEKNKWSVVDNETSSRAFYQTGG</sequence>
<dbReference type="EC" id="4.1.99.22" evidence="1"/>
<dbReference type="EMBL" id="AL111168">
    <property type="protein sequence ID" value="CAL34332.1"/>
    <property type="molecule type" value="Genomic_DNA"/>
</dbReference>
<dbReference type="PIR" id="A81434">
    <property type="entry name" value="A81434"/>
</dbReference>
<dbReference type="RefSeq" id="WP_002868437.1">
    <property type="nucleotide sequence ID" value="NZ_SZUC01000006.1"/>
</dbReference>
<dbReference type="RefSeq" id="YP_002343621.1">
    <property type="nucleotide sequence ID" value="NC_002163.1"/>
</dbReference>
<dbReference type="SMR" id="Q9PIW6"/>
<dbReference type="IntAct" id="Q9PIW6">
    <property type="interactions" value="9"/>
</dbReference>
<dbReference type="STRING" id="192222.Cj0161c"/>
<dbReference type="PaxDb" id="192222-Cj0161c"/>
<dbReference type="EnsemblBacteria" id="CAL34332">
    <property type="protein sequence ID" value="CAL34332"/>
    <property type="gene ID" value="Cj0161c"/>
</dbReference>
<dbReference type="GeneID" id="904499"/>
<dbReference type="KEGG" id="cje:Cj0161c"/>
<dbReference type="PATRIC" id="fig|192222.6.peg.159"/>
<dbReference type="eggNOG" id="COG2896">
    <property type="taxonomic scope" value="Bacteria"/>
</dbReference>
<dbReference type="HOGENOM" id="CLU_009273_0_1_7"/>
<dbReference type="OrthoDB" id="9763993at2"/>
<dbReference type="UniPathway" id="UPA00344"/>
<dbReference type="Proteomes" id="UP000000799">
    <property type="component" value="Chromosome"/>
</dbReference>
<dbReference type="GO" id="GO:0051539">
    <property type="term" value="F:4 iron, 4 sulfur cluster binding"/>
    <property type="evidence" value="ECO:0007669"/>
    <property type="project" value="UniProtKB-UniRule"/>
</dbReference>
<dbReference type="GO" id="GO:0061799">
    <property type="term" value="F:cyclic pyranopterin monophosphate synthase activity"/>
    <property type="evidence" value="ECO:0007669"/>
    <property type="project" value="TreeGrafter"/>
</dbReference>
<dbReference type="GO" id="GO:0061798">
    <property type="term" value="F:GTP 3',8'-cyclase activity"/>
    <property type="evidence" value="ECO:0007669"/>
    <property type="project" value="UniProtKB-UniRule"/>
</dbReference>
<dbReference type="GO" id="GO:0005525">
    <property type="term" value="F:GTP binding"/>
    <property type="evidence" value="ECO:0007669"/>
    <property type="project" value="UniProtKB-UniRule"/>
</dbReference>
<dbReference type="GO" id="GO:0046872">
    <property type="term" value="F:metal ion binding"/>
    <property type="evidence" value="ECO:0007669"/>
    <property type="project" value="UniProtKB-KW"/>
</dbReference>
<dbReference type="GO" id="GO:1904047">
    <property type="term" value="F:S-adenosyl-L-methionine binding"/>
    <property type="evidence" value="ECO:0007669"/>
    <property type="project" value="UniProtKB-UniRule"/>
</dbReference>
<dbReference type="GO" id="GO:0006777">
    <property type="term" value="P:Mo-molybdopterin cofactor biosynthetic process"/>
    <property type="evidence" value="ECO:0007669"/>
    <property type="project" value="UniProtKB-UniRule"/>
</dbReference>
<dbReference type="CDD" id="cd01335">
    <property type="entry name" value="Radical_SAM"/>
    <property type="match status" value="1"/>
</dbReference>
<dbReference type="CDD" id="cd21117">
    <property type="entry name" value="Twitch_MoaA"/>
    <property type="match status" value="1"/>
</dbReference>
<dbReference type="FunFam" id="3.20.20.70:FF:000285">
    <property type="entry name" value="GTP 3',8-cyclase"/>
    <property type="match status" value="1"/>
</dbReference>
<dbReference type="Gene3D" id="3.20.20.70">
    <property type="entry name" value="Aldolase class I"/>
    <property type="match status" value="1"/>
</dbReference>
<dbReference type="HAMAP" id="MF_01225_B">
    <property type="entry name" value="MoaA_B"/>
    <property type="match status" value="1"/>
</dbReference>
<dbReference type="InterPro" id="IPR013785">
    <property type="entry name" value="Aldolase_TIM"/>
</dbReference>
<dbReference type="InterPro" id="IPR006638">
    <property type="entry name" value="Elp3/MiaA/NifB-like_rSAM"/>
</dbReference>
<dbReference type="InterPro" id="IPR013483">
    <property type="entry name" value="MoaA"/>
</dbReference>
<dbReference type="InterPro" id="IPR000385">
    <property type="entry name" value="MoaA_NifB_PqqE_Fe-S-bd_CS"/>
</dbReference>
<dbReference type="InterPro" id="IPR010505">
    <property type="entry name" value="MoaA_twitch"/>
</dbReference>
<dbReference type="InterPro" id="IPR050105">
    <property type="entry name" value="MoCo_biosynth_MoaA/MoaC"/>
</dbReference>
<dbReference type="InterPro" id="IPR007197">
    <property type="entry name" value="rSAM"/>
</dbReference>
<dbReference type="NCBIfam" id="TIGR02666">
    <property type="entry name" value="moaA"/>
    <property type="match status" value="1"/>
</dbReference>
<dbReference type="PANTHER" id="PTHR22960:SF0">
    <property type="entry name" value="MOLYBDENUM COFACTOR BIOSYNTHESIS PROTEIN 1"/>
    <property type="match status" value="1"/>
</dbReference>
<dbReference type="PANTHER" id="PTHR22960">
    <property type="entry name" value="MOLYBDOPTERIN COFACTOR SYNTHESIS PROTEIN A"/>
    <property type="match status" value="1"/>
</dbReference>
<dbReference type="Pfam" id="PF13353">
    <property type="entry name" value="Fer4_12"/>
    <property type="match status" value="1"/>
</dbReference>
<dbReference type="Pfam" id="PF06463">
    <property type="entry name" value="Mob_synth_C"/>
    <property type="match status" value="1"/>
</dbReference>
<dbReference type="Pfam" id="PF04055">
    <property type="entry name" value="Radical_SAM"/>
    <property type="match status" value="1"/>
</dbReference>
<dbReference type="SFLD" id="SFLDG01383">
    <property type="entry name" value="cyclic_pyranopterin_phosphate"/>
    <property type="match status" value="1"/>
</dbReference>
<dbReference type="SFLD" id="SFLDG01072">
    <property type="entry name" value="dehydrogenase_like"/>
    <property type="match status" value="1"/>
</dbReference>
<dbReference type="SMART" id="SM00729">
    <property type="entry name" value="Elp3"/>
    <property type="match status" value="1"/>
</dbReference>
<dbReference type="SUPFAM" id="SSF102114">
    <property type="entry name" value="Radical SAM enzymes"/>
    <property type="match status" value="1"/>
</dbReference>
<dbReference type="PROSITE" id="PS01305">
    <property type="entry name" value="MOAA_NIFB_PQQE"/>
    <property type="match status" value="1"/>
</dbReference>
<dbReference type="PROSITE" id="PS51918">
    <property type="entry name" value="RADICAL_SAM"/>
    <property type="match status" value="1"/>
</dbReference>
<feature type="chain" id="PRO_0000152952" description="GTP 3',8-cyclase">
    <location>
        <begin position="1"/>
        <end position="320"/>
    </location>
</feature>
<feature type="domain" description="Radical SAM core" evidence="2">
    <location>
        <begin position="5"/>
        <end position="225"/>
    </location>
</feature>
<feature type="binding site" evidence="1">
    <location>
        <position position="14"/>
    </location>
    <ligand>
        <name>GTP</name>
        <dbReference type="ChEBI" id="CHEBI:37565"/>
    </ligand>
</feature>
<feature type="binding site" evidence="1">
    <location>
        <position position="21"/>
    </location>
    <ligand>
        <name>[4Fe-4S] cluster</name>
        <dbReference type="ChEBI" id="CHEBI:49883"/>
        <label>1</label>
        <note>4Fe-4S-S-AdoMet</note>
    </ligand>
</feature>
<feature type="binding site" evidence="1">
    <location>
        <position position="25"/>
    </location>
    <ligand>
        <name>[4Fe-4S] cluster</name>
        <dbReference type="ChEBI" id="CHEBI:49883"/>
        <label>1</label>
        <note>4Fe-4S-S-AdoMet</note>
    </ligand>
</feature>
<feature type="binding site" evidence="1">
    <location>
        <position position="27"/>
    </location>
    <ligand>
        <name>S-adenosyl-L-methionine</name>
        <dbReference type="ChEBI" id="CHEBI:59789"/>
    </ligand>
</feature>
<feature type="binding site" evidence="1">
    <location>
        <position position="28"/>
    </location>
    <ligand>
        <name>[4Fe-4S] cluster</name>
        <dbReference type="ChEBI" id="CHEBI:49883"/>
        <label>1</label>
        <note>4Fe-4S-S-AdoMet</note>
    </ligand>
</feature>
<feature type="binding site" evidence="1">
    <location>
        <position position="64"/>
    </location>
    <ligand>
        <name>GTP</name>
        <dbReference type="ChEBI" id="CHEBI:37565"/>
    </ligand>
</feature>
<feature type="binding site" evidence="1">
    <location>
        <position position="68"/>
    </location>
    <ligand>
        <name>S-adenosyl-L-methionine</name>
        <dbReference type="ChEBI" id="CHEBI:59789"/>
    </ligand>
</feature>
<feature type="binding site" evidence="1">
    <location>
        <position position="95"/>
    </location>
    <ligand>
        <name>GTP</name>
        <dbReference type="ChEBI" id="CHEBI:37565"/>
    </ligand>
</feature>
<feature type="binding site" evidence="1">
    <location>
        <position position="119"/>
    </location>
    <ligand>
        <name>S-adenosyl-L-methionine</name>
        <dbReference type="ChEBI" id="CHEBI:59789"/>
    </ligand>
</feature>
<feature type="binding site" evidence="1">
    <location>
        <position position="155"/>
    </location>
    <ligand>
        <name>GTP</name>
        <dbReference type="ChEBI" id="CHEBI:37565"/>
    </ligand>
</feature>
<feature type="binding site" evidence="1">
    <location>
        <position position="189"/>
    </location>
    <ligand>
        <name>S-adenosyl-L-methionine</name>
        <dbReference type="ChEBI" id="CHEBI:59789"/>
    </ligand>
</feature>
<feature type="binding site" evidence="1">
    <location>
        <position position="248"/>
    </location>
    <ligand>
        <name>[4Fe-4S] cluster</name>
        <dbReference type="ChEBI" id="CHEBI:49883"/>
        <label>2</label>
        <note>4Fe-4S-substrate</note>
    </ligand>
</feature>
<feature type="binding site" evidence="1">
    <location>
        <position position="251"/>
    </location>
    <ligand>
        <name>[4Fe-4S] cluster</name>
        <dbReference type="ChEBI" id="CHEBI:49883"/>
        <label>2</label>
        <note>4Fe-4S-substrate</note>
    </ligand>
</feature>
<feature type="binding site" evidence="1">
    <location>
        <begin position="253"/>
        <end position="255"/>
    </location>
    <ligand>
        <name>GTP</name>
        <dbReference type="ChEBI" id="CHEBI:37565"/>
    </ligand>
</feature>
<feature type="binding site" evidence="1">
    <location>
        <position position="265"/>
    </location>
    <ligand>
        <name>[4Fe-4S] cluster</name>
        <dbReference type="ChEBI" id="CHEBI:49883"/>
        <label>2</label>
        <note>4Fe-4S-substrate</note>
    </ligand>
</feature>
<organism>
    <name type="scientific">Campylobacter jejuni subsp. jejuni serotype O:2 (strain ATCC 700819 / NCTC 11168)</name>
    <dbReference type="NCBI Taxonomy" id="192222"/>
    <lineage>
        <taxon>Bacteria</taxon>
        <taxon>Pseudomonadati</taxon>
        <taxon>Campylobacterota</taxon>
        <taxon>Epsilonproteobacteria</taxon>
        <taxon>Campylobacterales</taxon>
        <taxon>Campylobacteraceae</taxon>
        <taxon>Campylobacter</taxon>
    </lineage>
</organism>
<reference key="1">
    <citation type="journal article" date="2000" name="Nature">
        <title>The genome sequence of the food-borne pathogen Campylobacter jejuni reveals hypervariable sequences.</title>
        <authorList>
            <person name="Parkhill J."/>
            <person name="Wren B.W."/>
            <person name="Mungall K.L."/>
            <person name="Ketley J.M."/>
            <person name="Churcher C.M."/>
            <person name="Basham D."/>
            <person name="Chillingworth T."/>
            <person name="Davies R.M."/>
            <person name="Feltwell T."/>
            <person name="Holroyd S."/>
            <person name="Jagels K."/>
            <person name="Karlyshev A.V."/>
            <person name="Moule S."/>
            <person name="Pallen M.J."/>
            <person name="Penn C.W."/>
            <person name="Quail M.A."/>
            <person name="Rajandream M.A."/>
            <person name="Rutherford K.M."/>
            <person name="van Vliet A.H.M."/>
            <person name="Whitehead S."/>
            <person name="Barrell B.G."/>
        </authorList>
    </citation>
    <scope>NUCLEOTIDE SEQUENCE [LARGE SCALE GENOMIC DNA]</scope>
    <source>
        <strain>ATCC 700819 / NCTC 11168</strain>
    </source>
</reference>
<keyword id="KW-0004">4Fe-4S</keyword>
<keyword id="KW-0342">GTP-binding</keyword>
<keyword id="KW-0408">Iron</keyword>
<keyword id="KW-0411">Iron-sulfur</keyword>
<keyword id="KW-0456">Lyase</keyword>
<keyword id="KW-0479">Metal-binding</keyword>
<keyword id="KW-0501">Molybdenum cofactor biosynthesis</keyword>
<keyword id="KW-0547">Nucleotide-binding</keyword>
<keyword id="KW-1185">Reference proteome</keyword>
<keyword id="KW-0949">S-adenosyl-L-methionine</keyword>
<gene>
    <name evidence="1" type="primary">moaA</name>
    <name type="ordered locus">Cj0161c</name>
</gene>
<proteinExistence type="inferred from homology"/>
<protein>
    <recommendedName>
        <fullName evidence="1">GTP 3',8-cyclase</fullName>
        <ecNumber evidence="1">4.1.99.22</ecNumber>
    </recommendedName>
    <alternativeName>
        <fullName evidence="1">Molybdenum cofactor biosynthesis protein A</fullName>
    </alternativeName>
</protein>
<comment type="function">
    <text evidence="1">Catalyzes the cyclization of GTP to (8S)-3',8-cyclo-7,8-dihydroguanosine 5'-triphosphate.</text>
</comment>
<comment type="catalytic activity">
    <reaction evidence="1">
        <text>GTP + AH2 + S-adenosyl-L-methionine = (8S)-3',8-cyclo-7,8-dihydroguanosine 5'-triphosphate + 5'-deoxyadenosine + L-methionine + A + H(+)</text>
        <dbReference type="Rhea" id="RHEA:49576"/>
        <dbReference type="ChEBI" id="CHEBI:13193"/>
        <dbReference type="ChEBI" id="CHEBI:15378"/>
        <dbReference type="ChEBI" id="CHEBI:17319"/>
        <dbReference type="ChEBI" id="CHEBI:17499"/>
        <dbReference type="ChEBI" id="CHEBI:37565"/>
        <dbReference type="ChEBI" id="CHEBI:57844"/>
        <dbReference type="ChEBI" id="CHEBI:59789"/>
        <dbReference type="ChEBI" id="CHEBI:131766"/>
        <dbReference type="EC" id="4.1.99.22"/>
    </reaction>
</comment>
<comment type="cofactor">
    <cofactor evidence="1">
        <name>[4Fe-4S] cluster</name>
        <dbReference type="ChEBI" id="CHEBI:49883"/>
    </cofactor>
    <text evidence="1">Binds 2 [4Fe-4S] clusters. Binds 1 [4Fe-4S] cluster coordinated with 3 cysteines and an exchangeable S-adenosyl-L-methionine and 1 [4Fe-4S] cluster coordinated with 3 cysteines and the GTP-derived substrate.</text>
</comment>
<comment type="pathway">
    <text evidence="1">Cofactor biosynthesis; molybdopterin biosynthesis.</text>
</comment>
<comment type="subunit">
    <text evidence="1">Monomer and homodimer.</text>
</comment>
<comment type="similarity">
    <text evidence="1">Belongs to the radical SAM superfamily. MoaA family.</text>
</comment>